<reference key="1">
    <citation type="journal article" date="2005" name="Nature">
        <title>The genome of the social amoeba Dictyostelium discoideum.</title>
        <authorList>
            <person name="Eichinger L."/>
            <person name="Pachebat J.A."/>
            <person name="Gloeckner G."/>
            <person name="Rajandream M.A."/>
            <person name="Sucgang R."/>
            <person name="Berriman M."/>
            <person name="Song J."/>
            <person name="Olsen R."/>
            <person name="Szafranski K."/>
            <person name="Xu Q."/>
            <person name="Tunggal B."/>
            <person name="Kummerfeld S."/>
            <person name="Madera M."/>
            <person name="Konfortov B.A."/>
            <person name="Rivero F."/>
            <person name="Bankier A.T."/>
            <person name="Lehmann R."/>
            <person name="Hamlin N."/>
            <person name="Davies R."/>
            <person name="Gaudet P."/>
            <person name="Fey P."/>
            <person name="Pilcher K."/>
            <person name="Chen G."/>
            <person name="Saunders D."/>
            <person name="Sodergren E.J."/>
            <person name="Davis P."/>
            <person name="Kerhornou A."/>
            <person name="Nie X."/>
            <person name="Hall N."/>
            <person name="Anjard C."/>
            <person name="Hemphill L."/>
            <person name="Bason N."/>
            <person name="Farbrother P."/>
            <person name="Desany B."/>
            <person name="Just E."/>
            <person name="Morio T."/>
            <person name="Rost R."/>
            <person name="Churcher C.M."/>
            <person name="Cooper J."/>
            <person name="Haydock S."/>
            <person name="van Driessche N."/>
            <person name="Cronin A."/>
            <person name="Goodhead I."/>
            <person name="Muzny D.M."/>
            <person name="Mourier T."/>
            <person name="Pain A."/>
            <person name="Lu M."/>
            <person name="Harper D."/>
            <person name="Lindsay R."/>
            <person name="Hauser H."/>
            <person name="James K.D."/>
            <person name="Quiles M."/>
            <person name="Madan Babu M."/>
            <person name="Saito T."/>
            <person name="Buchrieser C."/>
            <person name="Wardroper A."/>
            <person name="Felder M."/>
            <person name="Thangavelu M."/>
            <person name="Johnson D."/>
            <person name="Knights A."/>
            <person name="Loulseged H."/>
            <person name="Mungall K.L."/>
            <person name="Oliver K."/>
            <person name="Price C."/>
            <person name="Quail M.A."/>
            <person name="Urushihara H."/>
            <person name="Hernandez J."/>
            <person name="Rabbinowitsch E."/>
            <person name="Steffen D."/>
            <person name="Sanders M."/>
            <person name="Ma J."/>
            <person name="Kohara Y."/>
            <person name="Sharp S."/>
            <person name="Simmonds M.N."/>
            <person name="Spiegler S."/>
            <person name="Tivey A."/>
            <person name="Sugano S."/>
            <person name="White B."/>
            <person name="Walker D."/>
            <person name="Woodward J.R."/>
            <person name="Winckler T."/>
            <person name="Tanaka Y."/>
            <person name="Shaulsky G."/>
            <person name="Schleicher M."/>
            <person name="Weinstock G.M."/>
            <person name="Rosenthal A."/>
            <person name="Cox E.C."/>
            <person name="Chisholm R.L."/>
            <person name="Gibbs R.A."/>
            <person name="Loomis W.F."/>
            <person name="Platzer M."/>
            <person name="Kay R.R."/>
            <person name="Williams J.G."/>
            <person name="Dear P.H."/>
            <person name="Noegel A.A."/>
            <person name="Barrell B.G."/>
            <person name="Kuspa A."/>
        </authorList>
    </citation>
    <scope>NUCLEOTIDE SEQUENCE [LARGE SCALE GENOMIC DNA]</scope>
    <source>
        <strain>AX4</strain>
    </source>
</reference>
<accession>Q54UU8</accession>
<name>TRXB_DICDI</name>
<evidence type="ECO:0000250" key="1">
    <source>
        <dbReference type="UniProtKB" id="P0A9P4"/>
    </source>
</evidence>
<evidence type="ECO:0000305" key="2"/>
<comment type="catalytic activity">
    <reaction>
        <text>[thioredoxin]-dithiol + NADP(+) = [thioredoxin]-disulfide + NADPH + H(+)</text>
        <dbReference type="Rhea" id="RHEA:20345"/>
        <dbReference type="Rhea" id="RHEA-COMP:10698"/>
        <dbReference type="Rhea" id="RHEA-COMP:10700"/>
        <dbReference type="ChEBI" id="CHEBI:15378"/>
        <dbReference type="ChEBI" id="CHEBI:29950"/>
        <dbReference type="ChEBI" id="CHEBI:50058"/>
        <dbReference type="ChEBI" id="CHEBI:57783"/>
        <dbReference type="ChEBI" id="CHEBI:58349"/>
        <dbReference type="EC" id="1.8.1.9"/>
    </reaction>
</comment>
<comment type="cofactor">
    <cofactor evidence="1">
        <name>FAD</name>
        <dbReference type="ChEBI" id="CHEBI:57692"/>
    </cofactor>
    <text evidence="1">Binds 1 FAD per subunit.</text>
</comment>
<comment type="subunit">
    <text evidence="1">Homodimer.</text>
</comment>
<comment type="miscellaneous">
    <text>The active site is a redox-active disulfide bond.</text>
</comment>
<comment type="similarity">
    <text evidence="2">Belongs to the class-II pyridine nucleotide-disulfide oxidoreductase family.</text>
</comment>
<keyword id="KW-1015">Disulfide bond</keyword>
<keyword id="KW-0274">FAD</keyword>
<keyword id="KW-0285">Flavoprotein</keyword>
<keyword id="KW-0521">NADP</keyword>
<keyword id="KW-0560">Oxidoreductase</keyword>
<keyword id="KW-0676">Redox-active center</keyword>
<keyword id="KW-1185">Reference proteome</keyword>
<feature type="chain" id="PRO_0000318657" description="Thioredoxin reductase">
    <location>
        <begin position="1"/>
        <end position="319"/>
    </location>
</feature>
<feature type="binding site" evidence="1">
    <location>
        <begin position="36"/>
        <end position="48"/>
    </location>
    <ligand>
        <name>FAD</name>
        <dbReference type="ChEBI" id="CHEBI:57692"/>
    </ligand>
</feature>
<feature type="binding site" evidence="1">
    <location>
        <begin position="289"/>
        <end position="298"/>
    </location>
    <ligand>
        <name>FAD</name>
        <dbReference type="ChEBI" id="CHEBI:57692"/>
    </ligand>
</feature>
<feature type="disulfide bond" description="Redox-active" evidence="1">
    <location>
        <begin position="144"/>
        <end position="147"/>
    </location>
</feature>
<proteinExistence type="inferred from homology"/>
<organism>
    <name type="scientific">Dictyostelium discoideum</name>
    <name type="common">Social amoeba</name>
    <dbReference type="NCBI Taxonomy" id="44689"/>
    <lineage>
        <taxon>Eukaryota</taxon>
        <taxon>Amoebozoa</taxon>
        <taxon>Evosea</taxon>
        <taxon>Eumycetozoa</taxon>
        <taxon>Dictyostelia</taxon>
        <taxon>Dictyosteliales</taxon>
        <taxon>Dictyosteliaceae</taxon>
        <taxon>Dictyostelium</taxon>
    </lineage>
</organism>
<dbReference type="EC" id="1.8.1.9"/>
<dbReference type="EMBL" id="AAFI02000038">
    <property type="protein sequence ID" value="EAL67065.1"/>
    <property type="molecule type" value="Genomic_DNA"/>
</dbReference>
<dbReference type="RefSeq" id="XP_641039.1">
    <property type="nucleotide sequence ID" value="XM_635947.1"/>
</dbReference>
<dbReference type="SMR" id="Q54UU8"/>
<dbReference type="FunCoup" id="Q54UU8">
    <property type="interactions" value="201"/>
</dbReference>
<dbReference type="STRING" id="44689.Q54UU8"/>
<dbReference type="PaxDb" id="44689-DDB0231235"/>
<dbReference type="EnsemblProtists" id="EAL67065">
    <property type="protein sequence ID" value="EAL67065"/>
    <property type="gene ID" value="DDB_G0280815"/>
</dbReference>
<dbReference type="GeneID" id="8622741"/>
<dbReference type="KEGG" id="ddi:DDB_G0280815"/>
<dbReference type="dictyBase" id="DDB_G0280815">
    <property type="gene designation" value="trrA"/>
</dbReference>
<dbReference type="VEuPathDB" id="AmoebaDB:DDB_G0280815"/>
<dbReference type="eggNOG" id="KOG0404">
    <property type="taxonomic scope" value="Eukaryota"/>
</dbReference>
<dbReference type="HOGENOM" id="CLU_031864_5_1_1"/>
<dbReference type="InParanoid" id="Q54UU8"/>
<dbReference type="OMA" id="GPCHVLK"/>
<dbReference type="PhylomeDB" id="Q54UU8"/>
<dbReference type="PRO" id="PR:Q54UU8"/>
<dbReference type="Proteomes" id="UP000002195">
    <property type="component" value="Chromosome 3"/>
</dbReference>
<dbReference type="GO" id="GO:0005829">
    <property type="term" value="C:cytosol"/>
    <property type="evidence" value="ECO:0000318"/>
    <property type="project" value="GO_Central"/>
</dbReference>
<dbReference type="GO" id="GO:0004791">
    <property type="term" value="F:thioredoxin-disulfide reductase (NADPH) activity"/>
    <property type="evidence" value="ECO:0000314"/>
    <property type="project" value="dictyBase"/>
</dbReference>
<dbReference type="GO" id="GO:0045454">
    <property type="term" value="P:cell redox homeostasis"/>
    <property type="evidence" value="ECO:0000314"/>
    <property type="project" value="dictyBase"/>
</dbReference>
<dbReference type="GO" id="GO:0031154">
    <property type="term" value="P:culmination involved in sorocarp development"/>
    <property type="evidence" value="ECO:0000315"/>
    <property type="project" value="dictyBase"/>
</dbReference>
<dbReference type="GO" id="GO:0006909">
    <property type="term" value="P:phagocytosis"/>
    <property type="evidence" value="ECO:0000315"/>
    <property type="project" value="dictyBase"/>
</dbReference>
<dbReference type="GO" id="GO:0019430">
    <property type="term" value="P:removal of superoxide radicals"/>
    <property type="evidence" value="ECO:0007669"/>
    <property type="project" value="InterPro"/>
</dbReference>
<dbReference type="FunFam" id="3.50.50.60:FF:000064">
    <property type="entry name" value="Thioredoxin reductase"/>
    <property type="match status" value="1"/>
</dbReference>
<dbReference type="Gene3D" id="3.50.50.60">
    <property type="entry name" value="FAD/NAD(P)-binding domain"/>
    <property type="match status" value="2"/>
</dbReference>
<dbReference type="InterPro" id="IPR036188">
    <property type="entry name" value="FAD/NAD-bd_sf"/>
</dbReference>
<dbReference type="InterPro" id="IPR023753">
    <property type="entry name" value="FAD/NAD-binding_dom"/>
</dbReference>
<dbReference type="InterPro" id="IPR050097">
    <property type="entry name" value="Ferredoxin-NADP_redctase_2"/>
</dbReference>
<dbReference type="InterPro" id="IPR008255">
    <property type="entry name" value="Pyr_nucl-diS_OxRdtase_2_AS"/>
</dbReference>
<dbReference type="InterPro" id="IPR005982">
    <property type="entry name" value="Thioredox_Rdtase"/>
</dbReference>
<dbReference type="NCBIfam" id="TIGR01292">
    <property type="entry name" value="TRX_reduct"/>
    <property type="match status" value="1"/>
</dbReference>
<dbReference type="PANTHER" id="PTHR48105">
    <property type="entry name" value="THIOREDOXIN REDUCTASE 1-RELATED-RELATED"/>
    <property type="match status" value="1"/>
</dbReference>
<dbReference type="Pfam" id="PF07992">
    <property type="entry name" value="Pyr_redox_2"/>
    <property type="match status" value="1"/>
</dbReference>
<dbReference type="PRINTS" id="PR00368">
    <property type="entry name" value="FADPNR"/>
</dbReference>
<dbReference type="PRINTS" id="PR00469">
    <property type="entry name" value="PNDRDTASEII"/>
</dbReference>
<dbReference type="SUPFAM" id="SSF51905">
    <property type="entry name" value="FAD/NAD(P)-binding domain"/>
    <property type="match status" value="1"/>
</dbReference>
<dbReference type="PROSITE" id="PS00573">
    <property type="entry name" value="PYRIDINE_REDOX_2"/>
    <property type="match status" value="1"/>
</dbReference>
<protein>
    <recommendedName>
        <fullName>Thioredoxin reductase</fullName>
        <ecNumber>1.8.1.9</ecNumber>
    </recommendedName>
</protein>
<gene>
    <name type="primary">trrA</name>
    <name type="ORF">DDB_G0280815</name>
</gene>
<sequence>MSTEKIQKVVIIGSGPAGHTAGIYAGRARLEPLMFEGFMAGGVAAGGQLTTTTEIENFPGFPIDISGSELMDKMREQNIKCGTTIETKTISKVDLKQRPFTIYVEDEEDKPIKAQSIIIATGATAKRMGVPGETEFWSKGVSACAVCDGALPIYRNKHLVVVGGGDTAAEEATFLTHFASKVTLLVRRNVMRASKAMQQKVFSNPKIEVLWDTTLVEIKGEKSVTSVGIYNSETKVSSNLDAQGLFYAIGHTPNSAFLNGQLNTDETGYIITQPGSTKTNVEGVFACGDVQDKVYRQAITAAGNGCMAALDCERFLSSL</sequence>